<protein>
    <recommendedName>
        <fullName>CBL-interacting protein kinase 2</fullName>
        <ecNumber>2.7.11.1</ecNumber>
    </recommendedName>
    <alternativeName>
        <fullName>OsCIPK02</fullName>
    </alternativeName>
</protein>
<accession>Q7X996</accession>
<accession>Q7X995</accession>
<dbReference type="EC" id="2.7.11.1"/>
<dbReference type="EMBL" id="AP003757">
    <property type="protein sequence ID" value="BAC79539.1"/>
    <property type="molecule type" value="Genomic_DNA"/>
</dbReference>
<dbReference type="EMBL" id="AP003757">
    <property type="protein sequence ID" value="BAC79540.1"/>
    <property type="status" value="ALT_SEQ"/>
    <property type="molecule type" value="Genomic_DNA"/>
</dbReference>
<dbReference type="EMBL" id="AP008213">
    <property type="protein sequence ID" value="BAF22550.1"/>
    <property type="molecule type" value="Genomic_DNA"/>
</dbReference>
<dbReference type="EMBL" id="AP014963">
    <property type="protein sequence ID" value="BAT03217.1"/>
    <property type="molecule type" value="Genomic_DNA"/>
</dbReference>
<dbReference type="EMBL" id="CM000144">
    <property type="protein sequence ID" value="EAZ41090.1"/>
    <property type="molecule type" value="Genomic_DNA"/>
</dbReference>
<dbReference type="EMBL" id="AK072868">
    <property type="status" value="NOT_ANNOTATED_CDS"/>
    <property type="molecule type" value="mRNA"/>
</dbReference>
<dbReference type="RefSeq" id="XP_015646996.1">
    <property type="nucleotide sequence ID" value="XM_015791510.1"/>
</dbReference>
<dbReference type="SMR" id="Q7X996"/>
<dbReference type="FunCoup" id="Q7X996">
    <property type="interactions" value="526"/>
</dbReference>
<dbReference type="STRING" id="39947.Q7X996"/>
<dbReference type="PaxDb" id="39947-Q7X996"/>
<dbReference type="EnsemblPlants" id="Os07t0678600-01">
    <property type="protein sequence ID" value="Os07t0678600-01"/>
    <property type="gene ID" value="Os07g0678600"/>
</dbReference>
<dbReference type="Gramene" id="Os07t0678600-01">
    <property type="protein sequence ID" value="Os07t0678600-01"/>
    <property type="gene ID" value="Os07g0678600"/>
</dbReference>
<dbReference type="KEGG" id="dosa:Os07g0678600"/>
<dbReference type="eggNOG" id="KOG0583">
    <property type="taxonomic scope" value="Eukaryota"/>
</dbReference>
<dbReference type="InParanoid" id="Q7X996"/>
<dbReference type="OMA" id="DFKFPNW"/>
<dbReference type="OrthoDB" id="193931at2759"/>
<dbReference type="Proteomes" id="UP000000763">
    <property type="component" value="Chromosome 7"/>
</dbReference>
<dbReference type="Proteomes" id="UP000007752">
    <property type="component" value="Chromosome 7"/>
</dbReference>
<dbReference type="Proteomes" id="UP000059680">
    <property type="component" value="Chromosome 7"/>
</dbReference>
<dbReference type="ExpressionAtlas" id="Q7X996">
    <property type="expression patterns" value="baseline and differential"/>
</dbReference>
<dbReference type="GO" id="GO:0005524">
    <property type="term" value="F:ATP binding"/>
    <property type="evidence" value="ECO:0007669"/>
    <property type="project" value="UniProtKB-KW"/>
</dbReference>
<dbReference type="GO" id="GO:0106310">
    <property type="term" value="F:protein serine kinase activity"/>
    <property type="evidence" value="ECO:0007669"/>
    <property type="project" value="RHEA"/>
</dbReference>
<dbReference type="GO" id="GO:0004674">
    <property type="term" value="F:protein serine/threonine kinase activity"/>
    <property type="evidence" value="ECO:0000318"/>
    <property type="project" value="GO_Central"/>
</dbReference>
<dbReference type="GO" id="GO:0007165">
    <property type="term" value="P:signal transduction"/>
    <property type="evidence" value="ECO:0000318"/>
    <property type="project" value="GO_Central"/>
</dbReference>
<dbReference type="CDD" id="cd12195">
    <property type="entry name" value="CIPK_C"/>
    <property type="match status" value="1"/>
</dbReference>
<dbReference type="CDD" id="cd14663">
    <property type="entry name" value="STKc_SnRK3"/>
    <property type="match status" value="1"/>
</dbReference>
<dbReference type="FunFam" id="1.10.510.10:FF:000653">
    <property type="entry name" value="Non-specific serine/threonine protein kinase"/>
    <property type="match status" value="1"/>
</dbReference>
<dbReference type="FunFam" id="3.30.200.20:FF:000096">
    <property type="entry name" value="Non-specific serine/threonine protein kinase"/>
    <property type="match status" value="1"/>
</dbReference>
<dbReference type="FunFam" id="3.30.310.80:FF:000005">
    <property type="entry name" value="Non-specific serine/threonine protein kinase"/>
    <property type="match status" value="1"/>
</dbReference>
<dbReference type="Gene3D" id="3.30.310.80">
    <property type="entry name" value="Kinase associated domain 1, KA1"/>
    <property type="match status" value="1"/>
</dbReference>
<dbReference type="Gene3D" id="1.10.510.10">
    <property type="entry name" value="Transferase(Phosphotransferase) domain 1"/>
    <property type="match status" value="1"/>
</dbReference>
<dbReference type="InterPro" id="IPR011009">
    <property type="entry name" value="Kinase-like_dom_sf"/>
</dbReference>
<dbReference type="InterPro" id="IPR018451">
    <property type="entry name" value="NAF/FISL_domain"/>
</dbReference>
<dbReference type="InterPro" id="IPR004041">
    <property type="entry name" value="NAF_dom"/>
</dbReference>
<dbReference type="InterPro" id="IPR000719">
    <property type="entry name" value="Prot_kinase_dom"/>
</dbReference>
<dbReference type="InterPro" id="IPR017441">
    <property type="entry name" value="Protein_kinase_ATP_BS"/>
</dbReference>
<dbReference type="InterPro" id="IPR008271">
    <property type="entry name" value="Ser/Thr_kinase_AS"/>
</dbReference>
<dbReference type="PANTHER" id="PTHR43895">
    <property type="entry name" value="CALCIUM/CALMODULIN-DEPENDENT PROTEIN KINASE KINASE-RELATED"/>
    <property type="match status" value="1"/>
</dbReference>
<dbReference type="PANTHER" id="PTHR43895:SF126">
    <property type="entry name" value="CBL-INTERACTING PROTEIN KINASE 2"/>
    <property type="match status" value="1"/>
</dbReference>
<dbReference type="Pfam" id="PF03822">
    <property type="entry name" value="NAF"/>
    <property type="match status" value="1"/>
</dbReference>
<dbReference type="Pfam" id="PF00069">
    <property type="entry name" value="Pkinase"/>
    <property type="match status" value="1"/>
</dbReference>
<dbReference type="SMART" id="SM00220">
    <property type="entry name" value="S_TKc"/>
    <property type="match status" value="1"/>
</dbReference>
<dbReference type="SUPFAM" id="SSF56112">
    <property type="entry name" value="Protein kinase-like (PK-like)"/>
    <property type="match status" value="1"/>
</dbReference>
<dbReference type="PROSITE" id="PS50816">
    <property type="entry name" value="NAF"/>
    <property type="match status" value="1"/>
</dbReference>
<dbReference type="PROSITE" id="PS00107">
    <property type="entry name" value="PROTEIN_KINASE_ATP"/>
    <property type="match status" value="1"/>
</dbReference>
<dbReference type="PROSITE" id="PS50011">
    <property type="entry name" value="PROTEIN_KINASE_DOM"/>
    <property type="match status" value="1"/>
</dbReference>
<dbReference type="PROSITE" id="PS00108">
    <property type="entry name" value="PROTEIN_KINASE_ST"/>
    <property type="match status" value="1"/>
</dbReference>
<comment type="function">
    <text evidence="1">CIPK serine-threonine protein kinases interact with CBL proteins. Binding of a CBL protein to the regulatory NAF domain of CIPK protein lead to the activation of the kinase in a calcium-dependent manner (By similarity).</text>
</comment>
<comment type="catalytic activity">
    <reaction>
        <text>L-seryl-[protein] + ATP = O-phospho-L-seryl-[protein] + ADP + H(+)</text>
        <dbReference type="Rhea" id="RHEA:17989"/>
        <dbReference type="Rhea" id="RHEA-COMP:9863"/>
        <dbReference type="Rhea" id="RHEA-COMP:11604"/>
        <dbReference type="ChEBI" id="CHEBI:15378"/>
        <dbReference type="ChEBI" id="CHEBI:29999"/>
        <dbReference type="ChEBI" id="CHEBI:30616"/>
        <dbReference type="ChEBI" id="CHEBI:83421"/>
        <dbReference type="ChEBI" id="CHEBI:456216"/>
        <dbReference type="EC" id="2.7.11.1"/>
    </reaction>
</comment>
<comment type="catalytic activity">
    <reaction>
        <text>L-threonyl-[protein] + ATP = O-phospho-L-threonyl-[protein] + ADP + H(+)</text>
        <dbReference type="Rhea" id="RHEA:46608"/>
        <dbReference type="Rhea" id="RHEA-COMP:11060"/>
        <dbReference type="Rhea" id="RHEA-COMP:11605"/>
        <dbReference type="ChEBI" id="CHEBI:15378"/>
        <dbReference type="ChEBI" id="CHEBI:30013"/>
        <dbReference type="ChEBI" id="CHEBI:30616"/>
        <dbReference type="ChEBI" id="CHEBI:61977"/>
        <dbReference type="ChEBI" id="CHEBI:456216"/>
        <dbReference type="EC" id="2.7.11.1"/>
    </reaction>
</comment>
<comment type="cofactor">
    <cofactor evidence="1">
        <name>Mn(2+)</name>
        <dbReference type="ChEBI" id="CHEBI:29035"/>
    </cofactor>
</comment>
<comment type="induction">
    <text evidence="5">By drought stress and abscisic acid (ABA).</text>
</comment>
<comment type="domain">
    <text evidence="1">The activation loop within the kinase domain is the target of phosphorylation/activation by upstream protein kinases. The PPI motif mediates the interaction with the ABI (abscisic acid-insensitive) phosphatases (By similarity).</text>
</comment>
<comment type="similarity">
    <text evidence="6">Belongs to the protein kinase superfamily. CAMK Ser/Thr protein kinase family. SNF1 subfamily.</text>
</comment>
<comment type="sequence caution" evidence="6">
    <conflict type="erroneous gene model prediction">
        <sequence resource="EMBL-CDS" id="BAC79540"/>
    </conflict>
</comment>
<proteinExistence type="evidence at transcript level"/>
<organism>
    <name type="scientific">Oryza sativa subsp. japonica</name>
    <name type="common">Rice</name>
    <dbReference type="NCBI Taxonomy" id="39947"/>
    <lineage>
        <taxon>Eukaryota</taxon>
        <taxon>Viridiplantae</taxon>
        <taxon>Streptophyta</taxon>
        <taxon>Embryophyta</taxon>
        <taxon>Tracheophyta</taxon>
        <taxon>Spermatophyta</taxon>
        <taxon>Magnoliopsida</taxon>
        <taxon>Liliopsida</taxon>
        <taxon>Poales</taxon>
        <taxon>Poaceae</taxon>
        <taxon>BOP clade</taxon>
        <taxon>Oryzoideae</taxon>
        <taxon>Oryzeae</taxon>
        <taxon>Oryzinae</taxon>
        <taxon>Oryza</taxon>
        <taxon>Oryza sativa</taxon>
    </lineage>
</organism>
<sequence>MAEQRGNMLMKKYEMGKLLGQGTFAKVYHARNTETSESVAIKMIDKEKVLKGGLMDQIKREISVMKLVRHPNIVQLYEVMATKTKIYFVLEHVKGGELFNKVQRGRLKEDAARKYFQQLICAVDFCHSRGVYHRDLKPENLLLDENSNLKVSDFGLSALADCKRQDGLLHTTCGTPAYVAPEVINRRGYDGAKADIWSCGVILFVLLAGYLPFHDKNLMDMYKKIGKAEFKCPSWFNTDVRRLLLRILDPNPSTRISMDKIMENPWFRKGLDAKLLRYNLQPKDAIPVDMSTDFDSFNSAPTLEKKPSNLNAFDIISLSTGLDLSGMFEESDKKESKFTSTSTASTIISKIEDIAKGLRLKLTKKDGGLLKMEGSKPGRKGVMGIDAEIFEVTPNFHLVELKKTNGDTLEYRKVLNQEMRPALKDIVWAWQGEQPKQQQQPTC</sequence>
<name>CIPK2_ORYSJ</name>
<feature type="chain" id="PRO_0000338360" description="CBL-interacting protein kinase 2">
    <location>
        <begin position="1"/>
        <end position="443"/>
    </location>
</feature>
<feature type="domain" description="Protein kinase" evidence="2">
    <location>
        <begin position="13"/>
        <end position="267"/>
    </location>
</feature>
<feature type="domain" description="NAF" evidence="3">
    <location>
        <begin position="302"/>
        <end position="329"/>
    </location>
</feature>
<feature type="region of interest" description="Activation loop" evidence="1">
    <location>
        <begin position="153"/>
        <end position="182"/>
    </location>
</feature>
<feature type="region of interest" description="PPI" evidence="1">
    <location>
        <begin position="333"/>
        <end position="362"/>
    </location>
</feature>
<feature type="active site" description="Proton acceptor" evidence="2 4">
    <location>
        <position position="135"/>
    </location>
</feature>
<feature type="binding site" evidence="2">
    <location>
        <begin position="19"/>
        <end position="27"/>
    </location>
    <ligand>
        <name>ATP</name>
        <dbReference type="ChEBI" id="CHEBI:30616"/>
    </ligand>
</feature>
<feature type="binding site" evidence="2">
    <location>
        <position position="42"/>
    </location>
    <ligand>
        <name>ATP</name>
        <dbReference type="ChEBI" id="CHEBI:30616"/>
    </ligand>
</feature>
<gene>
    <name type="primary">CIPK2</name>
    <name type="ordered locus">Os07g0678600</name>
    <name type="ordered locus">LOC_Os07g48100</name>
    <name type="ORF">OJ1409_C08.14-1</name>
    <name type="ORF">OJ1409_C08.14-2</name>
    <name type="ORF">OsJ_024573</name>
</gene>
<evidence type="ECO:0000250" key="1"/>
<evidence type="ECO:0000255" key="2">
    <source>
        <dbReference type="PROSITE-ProRule" id="PRU00159"/>
    </source>
</evidence>
<evidence type="ECO:0000255" key="3">
    <source>
        <dbReference type="PROSITE-ProRule" id="PRU00256"/>
    </source>
</evidence>
<evidence type="ECO:0000255" key="4">
    <source>
        <dbReference type="PROSITE-ProRule" id="PRU10027"/>
    </source>
</evidence>
<evidence type="ECO:0000269" key="5">
    <source>
    </source>
</evidence>
<evidence type="ECO:0000305" key="6"/>
<reference key="1">
    <citation type="journal article" date="2005" name="Nature">
        <title>The map-based sequence of the rice genome.</title>
        <authorList>
            <consortium name="International rice genome sequencing project (IRGSP)"/>
        </authorList>
    </citation>
    <scope>NUCLEOTIDE SEQUENCE [LARGE SCALE GENOMIC DNA]</scope>
    <source>
        <strain>cv. Nipponbare</strain>
    </source>
</reference>
<reference key="2">
    <citation type="journal article" date="2008" name="Nucleic Acids Res.">
        <title>The rice annotation project database (RAP-DB): 2008 update.</title>
        <authorList>
            <consortium name="The rice annotation project (RAP)"/>
        </authorList>
    </citation>
    <scope>GENOME REANNOTATION</scope>
    <source>
        <strain>cv. Nipponbare</strain>
    </source>
</reference>
<reference key="3">
    <citation type="journal article" date="2013" name="Rice">
        <title>Improvement of the Oryza sativa Nipponbare reference genome using next generation sequence and optical map data.</title>
        <authorList>
            <person name="Kawahara Y."/>
            <person name="de la Bastide M."/>
            <person name="Hamilton J.P."/>
            <person name="Kanamori H."/>
            <person name="McCombie W.R."/>
            <person name="Ouyang S."/>
            <person name="Schwartz D.C."/>
            <person name="Tanaka T."/>
            <person name="Wu J."/>
            <person name="Zhou S."/>
            <person name="Childs K.L."/>
            <person name="Davidson R.M."/>
            <person name="Lin H."/>
            <person name="Quesada-Ocampo L."/>
            <person name="Vaillancourt B."/>
            <person name="Sakai H."/>
            <person name="Lee S.S."/>
            <person name="Kim J."/>
            <person name="Numa H."/>
            <person name="Itoh T."/>
            <person name="Buell C.R."/>
            <person name="Matsumoto T."/>
        </authorList>
    </citation>
    <scope>GENOME REANNOTATION</scope>
    <source>
        <strain>cv. Nipponbare</strain>
    </source>
</reference>
<reference key="4">
    <citation type="journal article" date="2005" name="PLoS Biol.">
        <title>The genomes of Oryza sativa: a history of duplications.</title>
        <authorList>
            <person name="Yu J."/>
            <person name="Wang J."/>
            <person name="Lin W."/>
            <person name="Li S."/>
            <person name="Li H."/>
            <person name="Zhou J."/>
            <person name="Ni P."/>
            <person name="Dong W."/>
            <person name="Hu S."/>
            <person name="Zeng C."/>
            <person name="Zhang J."/>
            <person name="Zhang Y."/>
            <person name="Li R."/>
            <person name="Xu Z."/>
            <person name="Li S."/>
            <person name="Li X."/>
            <person name="Zheng H."/>
            <person name="Cong L."/>
            <person name="Lin L."/>
            <person name="Yin J."/>
            <person name="Geng J."/>
            <person name="Li G."/>
            <person name="Shi J."/>
            <person name="Liu J."/>
            <person name="Lv H."/>
            <person name="Li J."/>
            <person name="Wang J."/>
            <person name="Deng Y."/>
            <person name="Ran L."/>
            <person name="Shi X."/>
            <person name="Wang X."/>
            <person name="Wu Q."/>
            <person name="Li C."/>
            <person name="Ren X."/>
            <person name="Wang J."/>
            <person name="Wang X."/>
            <person name="Li D."/>
            <person name="Liu D."/>
            <person name="Zhang X."/>
            <person name="Ji Z."/>
            <person name="Zhao W."/>
            <person name="Sun Y."/>
            <person name="Zhang Z."/>
            <person name="Bao J."/>
            <person name="Han Y."/>
            <person name="Dong L."/>
            <person name="Ji J."/>
            <person name="Chen P."/>
            <person name="Wu S."/>
            <person name="Liu J."/>
            <person name="Xiao Y."/>
            <person name="Bu D."/>
            <person name="Tan J."/>
            <person name="Yang L."/>
            <person name="Ye C."/>
            <person name="Zhang J."/>
            <person name="Xu J."/>
            <person name="Zhou Y."/>
            <person name="Yu Y."/>
            <person name="Zhang B."/>
            <person name="Zhuang S."/>
            <person name="Wei H."/>
            <person name="Liu B."/>
            <person name="Lei M."/>
            <person name="Yu H."/>
            <person name="Li Y."/>
            <person name="Xu H."/>
            <person name="Wei S."/>
            <person name="He X."/>
            <person name="Fang L."/>
            <person name="Zhang Z."/>
            <person name="Zhang Y."/>
            <person name="Huang X."/>
            <person name="Su Z."/>
            <person name="Tong W."/>
            <person name="Li J."/>
            <person name="Tong Z."/>
            <person name="Li S."/>
            <person name="Ye J."/>
            <person name="Wang L."/>
            <person name="Fang L."/>
            <person name="Lei T."/>
            <person name="Chen C.-S."/>
            <person name="Chen H.-C."/>
            <person name="Xu Z."/>
            <person name="Li H."/>
            <person name="Huang H."/>
            <person name="Zhang F."/>
            <person name="Xu H."/>
            <person name="Li N."/>
            <person name="Zhao C."/>
            <person name="Li S."/>
            <person name="Dong L."/>
            <person name="Huang Y."/>
            <person name="Li L."/>
            <person name="Xi Y."/>
            <person name="Qi Q."/>
            <person name="Li W."/>
            <person name="Zhang B."/>
            <person name="Hu W."/>
            <person name="Zhang Y."/>
            <person name="Tian X."/>
            <person name="Jiao Y."/>
            <person name="Liang X."/>
            <person name="Jin J."/>
            <person name="Gao L."/>
            <person name="Zheng W."/>
            <person name="Hao B."/>
            <person name="Liu S.-M."/>
            <person name="Wang W."/>
            <person name="Yuan L."/>
            <person name="Cao M."/>
            <person name="McDermott J."/>
            <person name="Samudrala R."/>
            <person name="Wang J."/>
            <person name="Wong G.K.-S."/>
            <person name="Yang H."/>
        </authorList>
    </citation>
    <scope>NUCLEOTIDE SEQUENCE [LARGE SCALE GENOMIC DNA]</scope>
    <source>
        <strain>cv. Nipponbare</strain>
    </source>
</reference>
<reference key="5">
    <citation type="journal article" date="2003" name="Science">
        <title>Collection, mapping, and annotation of over 28,000 cDNA clones from japonica rice.</title>
        <authorList>
            <consortium name="The rice full-length cDNA consortium"/>
        </authorList>
    </citation>
    <scope>NUCLEOTIDE SEQUENCE [LARGE SCALE MRNA]</scope>
    <source>
        <strain>cv. Nipponbare</strain>
    </source>
</reference>
<reference key="6">
    <citation type="journal article" date="2004" name="Plant Physiol.">
        <title>Calcium sensors and their interacting protein kinases: genomics of the Arabidopsis and rice CBL-CIPK signaling networks.</title>
        <authorList>
            <person name="Kolukisaoglu U."/>
            <person name="Weinl S."/>
            <person name="Blazevic D."/>
            <person name="Batistic O."/>
            <person name="Kudla J."/>
        </authorList>
    </citation>
    <scope>GENE FAMILY</scope>
    <scope>NOMENCLATURE</scope>
</reference>
<reference key="7">
    <citation type="journal article" date="2007" name="Plant Physiol.">
        <title>Characterization of stress-responsive CIPK genes in rice for stress tolerance improvement.</title>
        <authorList>
            <person name="Xiang Y."/>
            <person name="Huang Y."/>
            <person name="Xiong L."/>
        </authorList>
    </citation>
    <scope>INDUCTION</scope>
</reference>
<keyword id="KW-0067">ATP-binding</keyword>
<keyword id="KW-0418">Kinase</keyword>
<keyword id="KW-0464">Manganese</keyword>
<keyword id="KW-0547">Nucleotide-binding</keyword>
<keyword id="KW-1185">Reference proteome</keyword>
<keyword id="KW-0723">Serine/threonine-protein kinase</keyword>
<keyword id="KW-0808">Transferase</keyword>